<reference key="1">
    <citation type="submission" date="1995-01" db="EMBL/GenBank/DDBJ databases">
        <title>Putative second gene (fldB) for flavodoxin in Escherichia coli.</title>
        <authorList>
            <person name="Hayes F."/>
        </authorList>
    </citation>
    <scope>NUCLEOTIDE SEQUENCE [GENOMIC DNA]</scope>
    <source>
        <strain>K12</strain>
    </source>
</reference>
<reference key="2">
    <citation type="journal article" date="1997" name="Science">
        <title>The complete genome sequence of Escherichia coli K-12.</title>
        <authorList>
            <person name="Blattner F.R."/>
            <person name="Plunkett G. III"/>
            <person name="Bloch C.A."/>
            <person name="Perna N.T."/>
            <person name="Burland V."/>
            <person name="Riley M."/>
            <person name="Collado-Vides J."/>
            <person name="Glasner J.D."/>
            <person name="Rode C.K."/>
            <person name="Mayhew G.F."/>
            <person name="Gregor J."/>
            <person name="Davis N.W."/>
            <person name="Kirkpatrick H.A."/>
            <person name="Goeden M.A."/>
            <person name="Rose D.J."/>
            <person name="Mau B."/>
            <person name="Shao Y."/>
        </authorList>
    </citation>
    <scope>NUCLEOTIDE SEQUENCE [LARGE SCALE GENOMIC DNA]</scope>
    <source>
        <strain>K12 / MG1655 / ATCC 47076</strain>
    </source>
</reference>
<reference key="3">
    <citation type="journal article" date="2006" name="Mol. Syst. Biol.">
        <title>Highly accurate genome sequences of Escherichia coli K-12 strains MG1655 and W3110.</title>
        <authorList>
            <person name="Hayashi K."/>
            <person name="Morooka N."/>
            <person name="Yamamoto Y."/>
            <person name="Fujita K."/>
            <person name="Isono K."/>
            <person name="Choi S."/>
            <person name="Ohtsubo E."/>
            <person name="Baba T."/>
            <person name="Wanner B.L."/>
            <person name="Mori H."/>
            <person name="Horiuchi T."/>
        </authorList>
    </citation>
    <scope>NUCLEOTIDE SEQUENCE [LARGE SCALE GENOMIC DNA]</scope>
    <source>
        <strain>K12 / W3110 / ATCC 27325 / DSM 5911</strain>
    </source>
</reference>
<gene>
    <name type="primary">fldB</name>
    <name type="ordered locus">b2895</name>
    <name type="ordered locus">JW2863</name>
</gene>
<evidence type="ECO:0000255" key="1">
    <source>
        <dbReference type="PROSITE-ProRule" id="PRU00088"/>
    </source>
</evidence>
<evidence type="ECO:0000305" key="2"/>
<evidence type="ECO:0007829" key="3">
    <source>
        <dbReference type="PDB" id="2MT9"/>
    </source>
</evidence>
<comment type="function">
    <text evidence="2">Low-potential electron donor to a number of redox enzymes.</text>
</comment>
<comment type="cofactor">
    <cofactor>
        <name>FMN</name>
        <dbReference type="ChEBI" id="CHEBI:58210"/>
    </cofactor>
</comment>
<comment type="similarity">
    <text evidence="2">Belongs to the flavodoxin family.</text>
</comment>
<name>FLAW_ECOLI</name>
<dbReference type="EMBL" id="Z48060">
    <property type="protein sequence ID" value="CAA88140.1"/>
    <property type="molecule type" value="Genomic_DNA"/>
</dbReference>
<dbReference type="EMBL" id="U28375">
    <property type="protein sequence ID" value="AAA83076.1"/>
    <property type="molecule type" value="Genomic_DNA"/>
</dbReference>
<dbReference type="EMBL" id="U00096">
    <property type="protein sequence ID" value="AAC75933.1"/>
    <property type="molecule type" value="Genomic_DNA"/>
</dbReference>
<dbReference type="EMBL" id="AP009048">
    <property type="protein sequence ID" value="BAE76960.1"/>
    <property type="molecule type" value="Genomic_DNA"/>
</dbReference>
<dbReference type="PIR" id="G65073">
    <property type="entry name" value="G65073"/>
</dbReference>
<dbReference type="RefSeq" id="NP_417371.1">
    <property type="nucleotide sequence ID" value="NC_000913.3"/>
</dbReference>
<dbReference type="RefSeq" id="WP_001055874.1">
    <property type="nucleotide sequence ID" value="NZ_STEB01000001.1"/>
</dbReference>
<dbReference type="PDB" id="2MT9">
    <property type="method" value="NMR"/>
    <property type="chains" value="A=1-173"/>
</dbReference>
<dbReference type="PDB" id="2MTB">
    <property type="method" value="NMR"/>
    <property type="chains" value="A=1-173"/>
</dbReference>
<dbReference type="PDBsum" id="2MT9"/>
<dbReference type="PDBsum" id="2MTB"/>
<dbReference type="SMR" id="P0ABY4"/>
<dbReference type="BioGRID" id="4262340">
    <property type="interactions" value="20"/>
</dbReference>
<dbReference type="FunCoup" id="P0ABY4">
    <property type="interactions" value="25"/>
</dbReference>
<dbReference type="IntAct" id="P0ABY4">
    <property type="interactions" value="8"/>
</dbReference>
<dbReference type="STRING" id="511145.b2895"/>
<dbReference type="jPOST" id="P0ABY4"/>
<dbReference type="PaxDb" id="511145-b2895"/>
<dbReference type="EnsemblBacteria" id="AAC75933">
    <property type="protein sequence ID" value="AAC75933"/>
    <property type="gene ID" value="b2895"/>
</dbReference>
<dbReference type="GeneID" id="93779107"/>
<dbReference type="GeneID" id="947361"/>
<dbReference type="KEGG" id="ecj:JW2863"/>
<dbReference type="KEGG" id="eco:b2895"/>
<dbReference type="KEGG" id="ecoc:C3026_15875"/>
<dbReference type="PATRIC" id="fig|1411691.4.peg.3838"/>
<dbReference type="EchoBASE" id="EB2559"/>
<dbReference type="eggNOG" id="COG0716">
    <property type="taxonomic scope" value="Bacteria"/>
</dbReference>
<dbReference type="HOGENOM" id="CLU_051402_1_0_6"/>
<dbReference type="InParanoid" id="P0ABY4"/>
<dbReference type="OMA" id="ILGISTW"/>
<dbReference type="OrthoDB" id="359268at2"/>
<dbReference type="PhylomeDB" id="P0ABY4"/>
<dbReference type="BioCyc" id="EcoCyc:FLAVODOXIN2-MONOMER"/>
<dbReference type="BioCyc" id="MetaCyc:FLAVODOXIN2-MONOMER"/>
<dbReference type="PRO" id="PR:P0ABY4"/>
<dbReference type="Proteomes" id="UP000000625">
    <property type="component" value="Chromosome"/>
</dbReference>
<dbReference type="GO" id="GO:0009055">
    <property type="term" value="F:electron transfer activity"/>
    <property type="evidence" value="ECO:0007669"/>
    <property type="project" value="InterPro"/>
</dbReference>
<dbReference type="GO" id="GO:0010181">
    <property type="term" value="F:FMN binding"/>
    <property type="evidence" value="ECO:0000314"/>
    <property type="project" value="EcoCyc"/>
</dbReference>
<dbReference type="FunFam" id="3.40.50.360:FF:000006">
    <property type="entry name" value="Flavodoxin"/>
    <property type="match status" value="1"/>
</dbReference>
<dbReference type="Gene3D" id="3.40.50.360">
    <property type="match status" value="1"/>
</dbReference>
<dbReference type="InterPro" id="IPR050619">
    <property type="entry name" value="Flavodoxin"/>
</dbReference>
<dbReference type="InterPro" id="IPR008254">
    <property type="entry name" value="Flavodoxin/NO_synth"/>
</dbReference>
<dbReference type="InterPro" id="IPR001226">
    <property type="entry name" value="Flavodoxin_CS"/>
</dbReference>
<dbReference type="InterPro" id="IPR010086">
    <property type="entry name" value="Flavodoxin_lc"/>
</dbReference>
<dbReference type="InterPro" id="IPR029039">
    <property type="entry name" value="Flavoprotein-like_sf"/>
</dbReference>
<dbReference type="NCBIfam" id="TIGR01752">
    <property type="entry name" value="flav_long"/>
    <property type="match status" value="1"/>
</dbReference>
<dbReference type="NCBIfam" id="NF009023">
    <property type="entry name" value="PRK12359.1"/>
    <property type="match status" value="1"/>
</dbReference>
<dbReference type="PANTHER" id="PTHR42809">
    <property type="entry name" value="FLAVODOXIN 2"/>
    <property type="match status" value="1"/>
</dbReference>
<dbReference type="PANTHER" id="PTHR42809:SF3">
    <property type="entry name" value="FLAVODOXIN 2"/>
    <property type="match status" value="1"/>
</dbReference>
<dbReference type="Pfam" id="PF00258">
    <property type="entry name" value="Flavodoxin_1"/>
    <property type="match status" value="1"/>
</dbReference>
<dbReference type="PIRSF" id="PIRSF038996">
    <property type="entry name" value="FldA"/>
    <property type="match status" value="1"/>
</dbReference>
<dbReference type="SUPFAM" id="SSF52218">
    <property type="entry name" value="Flavoproteins"/>
    <property type="match status" value="1"/>
</dbReference>
<dbReference type="PROSITE" id="PS00201">
    <property type="entry name" value="FLAVODOXIN"/>
    <property type="match status" value="1"/>
</dbReference>
<dbReference type="PROSITE" id="PS50902">
    <property type="entry name" value="FLAVODOXIN_LIKE"/>
    <property type="match status" value="1"/>
</dbReference>
<keyword id="KW-0002">3D-structure</keyword>
<keyword id="KW-0249">Electron transport</keyword>
<keyword id="KW-0285">Flavoprotein</keyword>
<keyword id="KW-0288">FMN</keyword>
<keyword id="KW-1185">Reference proteome</keyword>
<keyword id="KW-0813">Transport</keyword>
<protein>
    <recommendedName>
        <fullName>Flavodoxin 2</fullName>
    </recommendedName>
</protein>
<organism>
    <name type="scientific">Escherichia coli (strain K12)</name>
    <dbReference type="NCBI Taxonomy" id="83333"/>
    <lineage>
        <taxon>Bacteria</taxon>
        <taxon>Pseudomonadati</taxon>
        <taxon>Pseudomonadota</taxon>
        <taxon>Gammaproteobacteria</taxon>
        <taxon>Enterobacterales</taxon>
        <taxon>Enterobacteriaceae</taxon>
        <taxon>Escherichia</taxon>
    </lineage>
</organism>
<accession>P0ABY4</accession>
<accession>P41050</accession>
<accession>Q2M9U6</accession>
<proteinExistence type="evidence at protein level"/>
<sequence length="173" mass="19700">MNMGLFYGSSTCYTEMAAEKIRDIIGPELVTLHNLKDDSPKLMEQYDVLILGIPTWDFGEIQEDWEAVWDQLDDLNLEGKIVALYGLGDQLGYGEWFLDALGMLHDKLSTKGVKFVGYWPTEGYEFTSPKPVIADGQLFVGLALDETNQYDLSDERIQSWCEQILNEMAEHYA</sequence>
<feature type="chain" id="PRO_0000171626" description="Flavodoxin 2">
    <location>
        <begin position="1"/>
        <end position="173"/>
    </location>
</feature>
<feature type="domain" description="Flavodoxin-like" evidence="1">
    <location>
        <begin position="3"/>
        <end position="165"/>
    </location>
</feature>
<feature type="sequence conflict" description="In Ref. 1; CAA88140." evidence="2" ref="1">
    <original>F</original>
    <variation>C</variation>
    <location>
        <position position="115"/>
    </location>
</feature>
<feature type="strand" evidence="3">
    <location>
        <begin position="3"/>
        <end position="7"/>
    </location>
</feature>
<feature type="strand" evidence="3">
    <location>
        <begin position="10"/>
        <end position="12"/>
    </location>
</feature>
<feature type="helix" evidence="3">
    <location>
        <begin position="13"/>
        <end position="25"/>
    </location>
</feature>
<feature type="turn" evidence="3">
    <location>
        <begin position="27"/>
        <end position="29"/>
    </location>
</feature>
<feature type="strand" evidence="3">
    <location>
        <begin position="30"/>
        <end position="34"/>
    </location>
</feature>
<feature type="turn" evidence="3">
    <location>
        <begin position="35"/>
        <end position="37"/>
    </location>
</feature>
<feature type="helix" evidence="3">
    <location>
        <begin position="40"/>
        <end position="44"/>
    </location>
</feature>
<feature type="strand" evidence="3">
    <location>
        <begin position="46"/>
        <end position="56"/>
    </location>
</feature>
<feature type="turn" evidence="3">
    <location>
        <begin position="57"/>
        <end position="59"/>
    </location>
</feature>
<feature type="helix" evidence="3">
    <location>
        <begin position="63"/>
        <end position="68"/>
    </location>
</feature>
<feature type="helix" evidence="3">
    <location>
        <begin position="71"/>
        <end position="74"/>
    </location>
</feature>
<feature type="strand" evidence="3">
    <location>
        <begin position="81"/>
        <end position="88"/>
    </location>
</feature>
<feature type="turn" evidence="3">
    <location>
        <begin position="90"/>
        <end position="93"/>
    </location>
</feature>
<feature type="turn" evidence="3">
    <location>
        <begin position="95"/>
        <end position="98"/>
    </location>
</feature>
<feature type="helix" evidence="3">
    <location>
        <begin position="99"/>
        <end position="110"/>
    </location>
</feature>
<feature type="strand" evidence="3">
    <location>
        <begin position="114"/>
        <end position="116"/>
    </location>
</feature>
<feature type="strand" evidence="3">
    <location>
        <begin position="129"/>
        <end position="133"/>
    </location>
</feature>
<feature type="turn" evidence="3">
    <location>
        <begin position="134"/>
        <end position="137"/>
    </location>
</feature>
<feature type="strand" evidence="3">
    <location>
        <begin position="138"/>
        <end position="148"/>
    </location>
</feature>
<feature type="helix" evidence="3">
    <location>
        <begin position="149"/>
        <end position="151"/>
    </location>
</feature>
<feature type="helix" evidence="3">
    <location>
        <begin position="153"/>
        <end position="171"/>
    </location>
</feature>